<dbReference type="EC" id="3.4.21.92" evidence="1"/>
<dbReference type="EMBL" id="CP001472">
    <property type="protein sequence ID" value="ACO32181.1"/>
    <property type="molecule type" value="Genomic_DNA"/>
</dbReference>
<dbReference type="RefSeq" id="WP_015898462.1">
    <property type="nucleotide sequence ID" value="NC_012483.1"/>
</dbReference>
<dbReference type="SMR" id="C1F6W4"/>
<dbReference type="FunCoup" id="C1F6W4">
    <property type="interactions" value="471"/>
</dbReference>
<dbReference type="STRING" id="240015.ACP_3433"/>
<dbReference type="MEROPS" id="S14.001"/>
<dbReference type="KEGG" id="aca:ACP_3433"/>
<dbReference type="eggNOG" id="COG0740">
    <property type="taxonomic scope" value="Bacteria"/>
</dbReference>
<dbReference type="HOGENOM" id="CLU_058707_3_2_0"/>
<dbReference type="InParanoid" id="C1F6W4"/>
<dbReference type="OrthoDB" id="9802800at2"/>
<dbReference type="Proteomes" id="UP000002207">
    <property type="component" value="Chromosome"/>
</dbReference>
<dbReference type="GO" id="GO:0005737">
    <property type="term" value="C:cytoplasm"/>
    <property type="evidence" value="ECO:0007669"/>
    <property type="project" value="UniProtKB-SubCell"/>
</dbReference>
<dbReference type="GO" id="GO:0009368">
    <property type="term" value="C:endopeptidase Clp complex"/>
    <property type="evidence" value="ECO:0007669"/>
    <property type="project" value="TreeGrafter"/>
</dbReference>
<dbReference type="GO" id="GO:0004176">
    <property type="term" value="F:ATP-dependent peptidase activity"/>
    <property type="evidence" value="ECO:0007669"/>
    <property type="project" value="InterPro"/>
</dbReference>
<dbReference type="GO" id="GO:0051117">
    <property type="term" value="F:ATPase binding"/>
    <property type="evidence" value="ECO:0007669"/>
    <property type="project" value="TreeGrafter"/>
</dbReference>
<dbReference type="GO" id="GO:0004252">
    <property type="term" value="F:serine-type endopeptidase activity"/>
    <property type="evidence" value="ECO:0007669"/>
    <property type="project" value="UniProtKB-UniRule"/>
</dbReference>
<dbReference type="GO" id="GO:0006515">
    <property type="term" value="P:protein quality control for misfolded or incompletely synthesized proteins"/>
    <property type="evidence" value="ECO:0007669"/>
    <property type="project" value="TreeGrafter"/>
</dbReference>
<dbReference type="CDD" id="cd07017">
    <property type="entry name" value="S14_ClpP_2"/>
    <property type="match status" value="1"/>
</dbReference>
<dbReference type="FunFam" id="3.90.226.10:FF:000001">
    <property type="entry name" value="ATP-dependent Clp protease proteolytic subunit"/>
    <property type="match status" value="1"/>
</dbReference>
<dbReference type="Gene3D" id="3.90.226.10">
    <property type="entry name" value="2-enoyl-CoA Hydratase, Chain A, domain 1"/>
    <property type="match status" value="1"/>
</dbReference>
<dbReference type="HAMAP" id="MF_00444">
    <property type="entry name" value="ClpP"/>
    <property type="match status" value="1"/>
</dbReference>
<dbReference type="InterPro" id="IPR001907">
    <property type="entry name" value="ClpP"/>
</dbReference>
<dbReference type="InterPro" id="IPR029045">
    <property type="entry name" value="ClpP/crotonase-like_dom_sf"/>
</dbReference>
<dbReference type="InterPro" id="IPR023562">
    <property type="entry name" value="ClpP/TepA"/>
</dbReference>
<dbReference type="InterPro" id="IPR033135">
    <property type="entry name" value="ClpP_His_AS"/>
</dbReference>
<dbReference type="InterPro" id="IPR018215">
    <property type="entry name" value="ClpP_Ser_AS"/>
</dbReference>
<dbReference type="NCBIfam" id="TIGR00493">
    <property type="entry name" value="clpP"/>
    <property type="match status" value="1"/>
</dbReference>
<dbReference type="NCBIfam" id="NF001368">
    <property type="entry name" value="PRK00277.1"/>
    <property type="match status" value="1"/>
</dbReference>
<dbReference type="NCBIfam" id="NF009205">
    <property type="entry name" value="PRK12553.1"/>
    <property type="match status" value="1"/>
</dbReference>
<dbReference type="PANTHER" id="PTHR10381">
    <property type="entry name" value="ATP-DEPENDENT CLP PROTEASE PROTEOLYTIC SUBUNIT"/>
    <property type="match status" value="1"/>
</dbReference>
<dbReference type="PANTHER" id="PTHR10381:SF70">
    <property type="entry name" value="ATP-DEPENDENT CLP PROTEASE PROTEOLYTIC SUBUNIT"/>
    <property type="match status" value="1"/>
</dbReference>
<dbReference type="Pfam" id="PF00574">
    <property type="entry name" value="CLP_protease"/>
    <property type="match status" value="1"/>
</dbReference>
<dbReference type="PRINTS" id="PR00127">
    <property type="entry name" value="CLPPROTEASEP"/>
</dbReference>
<dbReference type="SUPFAM" id="SSF52096">
    <property type="entry name" value="ClpP/crotonase"/>
    <property type="match status" value="1"/>
</dbReference>
<dbReference type="PROSITE" id="PS00382">
    <property type="entry name" value="CLP_PROTEASE_HIS"/>
    <property type="match status" value="1"/>
</dbReference>
<dbReference type="PROSITE" id="PS00381">
    <property type="entry name" value="CLP_PROTEASE_SER"/>
    <property type="match status" value="1"/>
</dbReference>
<comment type="function">
    <text evidence="1">Cleaves peptides in various proteins in a process that requires ATP hydrolysis. Has a chymotrypsin-like activity. Plays a major role in the degradation of misfolded proteins.</text>
</comment>
<comment type="catalytic activity">
    <reaction evidence="1">
        <text>Hydrolysis of proteins to small peptides in the presence of ATP and magnesium. alpha-casein is the usual test substrate. In the absence of ATP, only oligopeptides shorter than five residues are hydrolyzed (such as succinyl-Leu-Tyr-|-NHMec, and Leu-Tyr-Leu-|-Tyr-Trp, in which cleavage of the -Tyr-|-Leu- and -Tyr-|-Trp bonds also occurs).</text>
        <dbReference type="EC" id="3.4.21.92"/>
    </reaction>
</comment>
<comment type="subunit">
    <text evidence="1">Fourteen ClpP subunits assemble into 2 heptameric rings which stack back to back to give a disk-like structure with a central cavity, resembling the structure of eukaryotic proteasomes.</text>
</comment>
<comment type="subcellular location">
    <subcellularLocation>
        <location evidence="1">Cytoplasm</location>
    </subcellularLocation>
</comment>
<comment type="similarity">
    <text evidence="1">Belongs to the peptidase S14 family.</text>
</comment>
<keyword id="KW-0963">Cytoplasm</keyword>
<keyword id="KW-0378">Hydrolase</keyword>
<keyword id="KW-0645">Protease</keyword>
<keyword id="KW-1185">Reference proteome</keyword>
<keyword id="KW-0720">Serine protease</keyword>
<feature type="chain" id="PRO_1000135145" description="ATP-dependent Clp protease proteolytic subunit">
    <location>
        <begin position="1"/>
        <end position="196"/>
    </location>
</feature>
<feature type="active site" description="Nucleophile" evidence="1">
    <location>
        <position position="98"/>
    </location>
</feature>
<feature type="active site" evidence="1">
    <location>
        <position position="123"/>
    </location>
</feature>
<evidence type="ECO:0000255" key="1">
    <source>
        <dbReference type="HAMAP-Rule" id="MF_00444"/>
    </source>
</evidence>
<gene>
    <name evidence="1" type="primary">clpP</name>
    <name type="ordered locus">ACP_3433</name>
</gene>
<organism>
    <name type="scientific">Acidobacterium capsulatum (strain ATCC 51196 / DSM 11244 / BCRC 80197 / JCM 7670 / NBRC 15755 / NCIMB 13165 / 161)</name>
    <dbReference type="NCBI Taxonomy" id="240015"/>
    <lineage>
        <taxon>Bacteria</taxon>
        <taxon>Pseudomonadati</taxon>
        <taxon>Acidobacteriota</taxon>
        <taxon>Terriglobia</taxon>
        <taxon>Terriglobales</taxon>
        <taxon>Acidobacteriaceae</taxon>
        <taxon>Acidobacterium</taxon>
    </lineage>
</organism>
<sequence length="196" mass="21851">MALVPMVIEQTNRGERAYDIYSRLLRDNIIFLGTPIDDQIANLVIAQLLFLSAEDPDKDIQLYINSPGGSITAGLAIYDTMQFIKNDVVTYCIGQAASMGAFLLMSGTAGKRFALPNSRILIHQPSMGGLSGQATDIDIHAREILRIREITNNLMSKHTGQSLERIERDVERDFIMNAPQAKEYGIIDEIIDRPRV</sequence>
<proteinExistence type="inferred from homology"/>
<reference key="1">
    <citation type="journal article" date="2009" name="Appl. Environ. Microbiol.">
        <title>Three genomes from the phylum Acidobacteria provide insight into the lifestyles of these microorganisms in soils.</title>
        <authorList>
            <person name="Ward N.L."/>
            <person name="Challacombe J.F."/>
            <person name="Janssen P.H."/>
            <person name="Henrissat B."/>
            <person name="Coutinho P.M."/>
            <person name="Wu M."/>
            <person name="Xie G."/>
            <person name="Haft D.H."/>
            <person name="Sait M."/>
            <person name="Badger J."/>
            <person name="Barabote R.D."/>
            <person name="Bradley B."/>
            <person name="Brettin T.S."/>
            <person name="Brinkac L.M."/>
            <person name="Bruce D."/>
            <person name="Creasy T."/>
            <person name="Daugherty S.C."/>
            <person name="Davidsen T.M."/>
            <person name="DeBoy R.T."/>
            <person name="Detter J.C."/>
            <person name="Dodson R.J."/>
            <person name="Durkin A.S."/>
            <person name="Ganapathy A."/>
            <person name="Gwinn-Giglio M."/>
            <person name="Han C.S."/>
            <person name="Khouri H."/>
            <person name="Kiss H."/>
            <person name="Kothari S.P."/>
            <person name="Madupu R."/>
            <person name="Nelson K.E."/>
            <person name="Nelson W.C."/>
            <person name="Paulsen I."/>
            <person name="Penn K."/>
            <person name="Ren Q."/>
            <person name="Rosovitz M.J."/>
            <person name="Selengut J.D."/>
            <person name="Shrivastava S."/>
            <person name="Sullivan S.A."/>
            <person name="Tapia R."/>
            <person name="Thompson L.S."/>
            <person name="Watkins K.L."/>
            <person name="Yang Q."/>
            <person name="Yu C."/>
            <person name="Zafar N."/>
            <person name="Zhou L."/>
            <person name="Kuske C.R."/>
        </authorList>
    </citation>
    <scope>NUCLEOTIDE SEQUENCE [LARGE SCALE GENOMIC DNA]</scope>
    <source>
        <strain>ATCC 51196 / DSM 11244 / BCRC 80197 / JCM 7670 / NBRC 15755 / NCIMB 13165 / 161</strain>
    </source>
</reference>
<protein>
    <recommendedName>
        <fullName evidence="1">ATP-dependent Clp protease proteolytic subunit</fullName>
        <ecNumber evidence="1">3.4.21.92</ecNumber>
    </recommendedName>
    <alternativeName>
        <fullName evidence="1">Endopeptidase Clp</fullName>
    </alternativeName>
</protein>
<name>CLPP_ACIC5</name>
<accession>C1F6W4</accession>